<evidence type="ECO:0000255" key="1">
    <source>
        <dbReference type="HAMAP-Rule" id="MF_00309"/>
    </source>
</evidence>
<name>VATA_STRPG</name>
<comment type="function">
    <text evidence="1">Produces ATP from ADP in the presence of a proton gradient across the membrane. The V-type alpha chain is a catalytic subunit.</text>
</comment>
<comment type="catalytic activity">
    <reaction evidence="1">
        <text>ATP + H2O + 4 H(+)(in) = ADP + phosphate + 5 H(+)(out)</text>
        <dbReference type="Rhea" id="RHEA:57720"/>
        <dbReference type="ChEBI" id="CHEBI:15377"/>
        <dbReference type="ChEBI" id="CHEBI:15378"/>
        <dbReference type="ChEBI" id="CHEBI:30616"/>
        <dbReference type="ChEBI" id="CHEBI:43474"/>
        <dbReference type="ChEBI" id="CHEBI:456216"/>
        <dbReference type="EC" id="7.1.2.2"/>
    </reaction>
</comment>
<comment type="similarity">
    <text evidence="1">Belongs to the ATPase alpha/beta chains family.</text>
</comment>
<sequence length="591" mass="65001">MNQGKIITVSGPLVVASGMQEANIQDICRVGHLGLVGEIIEMRRDQASIQVYEETSGIGPGEPVVTTGCPLSVELGPGLISEMFDGIQRPLDRFQKATDSDFLIRGVAIPSLDRKAKWAFIPKLSVGQEVVAGDILGTVQETAVIEHRIMVPYKVSGTLVAIHAGDFTVTDTVYEIKQEDGSIYQGSLMQTWPVRQSRPVAQKLIPVEPLVTGQRVIDTFFPVTKGGAAAVPGPFGAGKTVVQHQIAKFANVDIVIYVGCGERGNEMTDVLNEFPELIDPNTGQSIMERTVLIANTSNMPVAAREASIYTGITIAEYFRDMGYSVAIMADSTSRWAEALREMSGRLQEMPGDEGYPAYLGSRIAEYYERAGRVRTLGSQEREGTITAIGAVSPPGGDISEPVTQNTLRIVKVFWGLDAPLAQRRHFPAINWLTSYSLYQDDVGSYIDRKQQSNWSNKVTRAMAILQREASLEEIVRLVGLDSLSEQDRLTMAVARQIREDYLQQNAFDSVDTFTSFPKQEAMLTNILTFNEEASKALSLGAYFNEIMEGTAQVRDRIARSKFIPEENLEQIKGFTQKVTKEIHHVLAKGGI</sequence>
<reference key="1">
    <citation type="journal article" date="2007" name="J. Bacteriol.">
        <title>Complete genome of acute rheumatic fever-associated serotype M5 Streptococcus pyogenes strain Manfredo.</title>
        <authorList>
            <person name="Holden M.T.G."/>
            <person name="Scott A."/>
            <person name="Cherevach I."/>
            <person name="Chillingworth T."/>
            <person name="Churcher C."/>
            <person name="Cronin A."/>
            <person name="Dowd L."/>
            <person name="Feltwell T."/>
            <person name="Hamlin N."/>
            <person name="Holroyd S."/>
            <person name="Jagels K."/>
            <person name="Moule S."/>
            <person name="Mungall K."/>
            <person name="Quail M.A."/>
            <person name="Price C."/>
            <person name="Rabbinowitsch E."/>
            <person name="Sharp S."/>
            <person name="Skelton J."/>
            <person name="Whitehead S."/>
            <person name="Barrell B.G."/>
            <person name="Kehoe M."/>
            <person name="Parkhill J."/>
        </authorList>
    </citation>
    <scope>NUCLEOTIDE SEQUENCE [LARGE SCALE GENOMIC DNA]</scope>
    <source>
        <strain>Manfredo</strain>
    </source>
</reference>
<accession>A2RC97</accession>
<gene>
    <name evidence="1" type="primary">atpA</name>
    <name type="ordered locus">SpyM50126</name>
</gene>
<feature type="chain" id="PRO_1000059357" description="V-type ATP synthase alpha chain">
    <location>
        <begin position="1"/>
        <end position="591"/>
    </location>
</feature>
<feature type="binding site" evidence="1">
    <location>
        <begin position="233"/>
        <end position="240"/>
    </location>
    <ligand>
        <name>ATP</name>
        <dbReference type="ChEBI" id="CHEBI:30616"/>
    </ligand>
</feature>
<dbReference type="EC" id="7.1.2.2" evidence="1"/>
<dbReference type="EMBL" id="AM295007">
    <property type="protein sequence ID" value="CAM29469.1"/>
    <property type="molecule type" value="Genomic_DNA"/>
</dbReference>
<dbReference type="RefSeq" id="WP_011888554.1">
    <property type="nucleotide sequence ID" value="NC_009332.1"/>
</dbReference>
<dbReference type="SMR" id="A2RC97"/>
<dbReference type="KEGG" id="spf:SpyM50126"/>
<dbReference type="HOGENOM" id="CLU_008162_3_1_9"/>
<dbReference type="GO" id="GO:0045259">
    <property type="term" value="C:proton-transporting ATP synthase complex"/>
    <property type="evidence" value="ECO:0007669"/>
    <property type="project" value="UniProtKB-ARBA"/>
</dbReference>
<dbReference type="GO" id="GO:0005524">
    <property type="term" value="F:ATP binding"/>
    <property type="evidence" value="ECO:0007669"/>
    <property type="project" value="UniProtKB-UniRule"/>
</dbReference>
<dbReference type="GO" id="GO:0046933">
    <property type="term" value="F:proton-transporting ATP synthase activity, rotational mechanism"/>
    <property type="evidence" value="ECO:0007669"/>
    <property type="project" value="UniProtKB-UniRule"/>
</dbReference>
<dbReference type="GO" id="GO:0046961">
    <property type="term" value="F:proton-transporting ATPase activity, rotational mechanism"/>
    <property type="evidence" value="ECO:0007669"/>
    <property type="project" value="InterPro"/>
</dbReference>
<dbReference type="GO" id="GO:0042777">
    <property type="term" value="P:proton motive force-driven plasma membrane ATP synthesis"/>
    <property type="evidence" value="ECO:0007669"/>
    <property type="project" value="UniProtKB-UniRule"/>
</dbReference>
<dbReference type="CDD" id="cd18111">
    <property type="entry name" value="ATP-synt_V_A-type_alpha_C"/>
    <property type="match status" value="1"/>
</dbReference>
<dbReference type="CDD" id="cd18119">
    <property type="entry name" value="ATP-synt_V_A-type_alpha_N"/>
    <property type="match status" value="1"/>
</dbReference>
<dbReference type="CDD" id="cd01134">
    <property type="entry name" value="V_A-ATPase_A"/>
    <property type="match status" value="1"/>
</dbReference>
<dbReference type="FunFam" id="3.40.50.300:FF:000675">
    <property type="entry name" value="V-type ATP synthase alpha chain"/>
    <property type="match status" value="1"/>
</dbReference>
<dbReference type="FunFam" id="2.40.30.20:FF:000002">
    <property type="entry name" value="V-type proton ATPase catalytic subunit A"/>
    <property type="match status" value="1"/>
</dbReference>
<dbReference type="FunFam" id="2.40.50.100:FF:000008">
    <property type="entry name" value="V-type proton ATPase catalytic subunit A"/>
    <property type="match status" value="1"/>
</dbReference>
<dbReference type="Gene3D" id="2.40.30.20">
    <property type="match status" value="1"/>
</dbReference>
<dbReference type="Gene3D" id="2.40.50.100">
    <property type="match status" value="1"/>
</dbReference>
<dbReference type="Gene3D" id="1.10.1140.10">
    <property type="entry name" value="Bovine Mitochondrial F1-atpase, Atp Synthase Beta Chain, Chain D, domain 3"/>
    <property type="match status" value="1"/>
</dbReference>
<dbReference type="Gene3D" id="3.40.50.300">
    <property type="entry name" value="P-loop containing nucleotide triphosphate hydrolases"/>
    <property type="match status" value="1"/>
</dbReference>
<dbReference type="HAMAP" id="MF_00309">
    <property type="entry name" value="ATP_synth_A_arch"/>
    <property type="match status" value="1"/>
</dbReference>
<dbReference type="InterPro" id="IPR055190">
    <property type="entry name" value="ATP-synt_VA_C"/>
</dbReference>
<dbReference type="InterPro" id="IPR031686">
    <property type="entry name" value="ATP-synth_a_Xtn"/>
</dbReference>
<dbReference type="InterPro" id="IPR023366">
    <property type="entry name" value="ATP_synth_asu-like_sf"/>
</dbReference>
<dbReference type="InterPro" id="IPR020003">
    <property type="entry name" value="ATPase_a/bsu_AS"/>
</dbReference>
<dbReference type="InterPro" id="IPR004100">
    <property type="entry name" value="ATPase_F1/V1/A1_a/bsu_N"/>
</dbReference>
<dbReference type="InterPro" id="IPR036121">
    <property type="entry name" value="ATPase_F1/V1/A1_a/bsu_N_sf"/>
</dbReference>
<dbReference type="InterPro" id="IPR000194">
    <property type="entry name" value="ATPase_F1/V1/A1_a/bsu_nucl-bd"/>
</dbReference>
<dbReference type="InterPro" id="IPR024034">
    <property type="entry name" value="ATPase_F1/V1_b/a_C"/>
</dbReference>
<dbReference type="InterPro" id="IPR027417">
    <property type="entry name" value="P-loop_NTPase"/>
</dbReference>
<dbReference type="InterPro" id="IPR022878">
    <property type="entry name" value="V-ATPase_asu"/>
</dbReference>
<dbReference type="NCBIfam" id="NF003220">
    <property type="entry name" value="PRK04192.1"/>
    <property type="match status" value="1"/>
</dbReference>
<dbReference type="PANTHER" id="PTHR43607:SF1">
    <property type="entry name" value="H(+)-TRANSPORTING TWO-SECTOR ATPASE"/>
    <property type="match status" value="1"/>
</dbReference>
<dbReference type="PANTHER" id="PTHR43607">
    <property type="entry name" value="V-TYPE PROTON ATPASE CATALYTIC SUBUNIT A"/>
    <property type="match status" value="1"/>
</dbReference>
<dbReference type="Pfam" id="PF00006">
    <property type="entry name" value="ATP-synt_ab"/>
    <property type="match status" value="1"/>
</dbReference>
<dbReference type="Pfam" id="PF02874">
    <property type="entry name" value="ATP-synt_ab_N"/>
    <property type="match status" value="1"/>
</dbReference>
<dbReference type="Pfam" id="PF16886">
    <property type="entry name" value="ATP-synt_ab_Xtn"/>
    <property type="match status" value="1"/>
</dbReference>
<dbReference type="Pfam" id="PF22919">
    <property type="entry name" value="ATP-synt_VA_C"/>
    <property type="match status" value="1"/>
</dbReference>
<dbReference type="SUPFAM" id="SSF47917">
    <property type="entry name" value="C-terminal domain of alpha and beta subunits of F1 ATP synthase"/>
    <property type="match status" value="1"/>
</dbReference>
<dbReference type="SUPFAM" id="SSF50615">
    <property type="entry name" value="N-terminal domain of alpha and beta subunits of F1 ATP synthase"/>
    <property type="match status" value="1"/>
</dbReference>
<dbReference type="SUPFAM" id="SSF52540">
    <property type="entry name" value="P-loop containing nucleoside triphosphate hydrolases"/>
    <property type="match status" value="1"/>
</dbReference>
<dbReference type="PROSITE" id="PS00152">
    <property type="entry name" value="ATPASE_ALPHA_BETA"/>
    <property type="match status" value="1"/>
</dbReference>
<organism>
    <name type="scientific">Streptococcus pyogenes serotype M5 (strain Manfredo)</name>
    <dbReference type="NCBI Taxonomy" id="160491"/>
    <lineage>
        <taxon>Bacteria</taxon>
        <taxon>Bacillati</taxon>
        <taxon>Bacillota</taxon>
        <taxon>Bacilli</taxon>
        <taxon>Lactobacillales</taxon>
        <taxon>Streptococcaceae</taxon>
        <taxon>Streptococcus</taxon>
    </lineage>
</organism>
<proteinExistence type="inferred from homology"/>
<protein>
    <recommendedName>
        <fullName evidence="1">V-type ATP synthase alpha chain</fullName>
        <ecNumber evidence="1">7.1.2.2</ecNumber>
    </recommendedName>
    <alternativeName>
        <fullName evidence="1">V-ATPase subunit A</fullName>
    </alternativeName>
</protein>
<keyword id="KW-0066">ATP synthesis</keyword>
<keyword id="KW-0067">ATP-binding</keyword>
<keyword id="KW-0375">Hydrogen ion transport</keyword>
<keyword id="KW-0406">Ion transport</keyword>
<keyword id="KW-0547">Nucleotide-binding</keyword>
<keyword id="KW-1278">Translocase</keyword>
<keyword id="KW-0813">Transport</keyword>